<keyword id="KW-0496">Mitochondrion</keyword>
<keyword id="KW-0809">Transit peptide</keyword>
<feature type="transit peptide" description="Mitochondrion" evidence="2">
    <location>
        <begin position="1"/>
        <end position="21"/>
    </location>
</feature>
<feature type="chain" id="PRO_0000409646" description="Genetic interactor of prohibitins 3, mitochondrial">
    <location>
        <begin position="22"/>
        <end position="556"/>
    </location>
</feature>
<feature type="domain" description="CP-type G" evidence="3">
    <location>
        <begin position="113"/>
        <end position="305"/>
    </location>
</feature>
<name>GEP3_YEAS8</name>
<gene>
    <name type="primary">GEP3</name>
    <name type="synonym">AIM40</name>
    <name type="synonym">FMP48</name>
    <name type="ORF">EC1118_1O4_4291g</name>
</gene>
<dbReference type="EMBL" id="FN394216">
    <property type="protein sequence ID" value="CAY86490.1"/>
    <property type="molecule type" value="Genomic_DNA"/>
</dbReference>
<dbReference type="SMR" id="C8ZGW1"/>
<dbReference type="HOGENOM" id="CLU_025792_1_0_1"/>
<dbReference type="OrthoDB" id="33022at4893"/>
<dbReference type="Proteomes" id="UP000000286">
    <property type="component" value="Chromosome XV, Scaffold EC1118_1O4"/>
</dbReference>
<dbReference type="GO" id="GO:0005739">
    <property type="term" value="C:mitochondrion"/>
    <property type="evidence" value="ECO:0007669"/>
    <property type="project" value="UniProtKB-SubCell"/>
</dbReference>
<dbReference type="GO" id="GO:0005525">
    <property type="term" value="F:GTP binding"/>
    <property type="evidence" value="ECO:0007669"/>
    <property type="project" value="InterPro"/>
</dbReference>
<dbReference type="CDD" id="cd01855">
    <property type="entry name" value="YqeH"/>
    <property type="match status" value="1"/>
</dbReference>
<dbReference type="Gene3D" id="3.40.50.300">
    <property type="entry name" value="P-loop containing nucleotide triphosphate hydrolases"/>
    <property type="match status" value="1"/>
</dbReference>
<dbReference type="InterPro" id="IPR030378">
    <property type="entry name" value="G_CP_dom"/>
</dbReference>
<dbReference type="InterPro" id="IPR006073">
    <property type="entry name" value="GTP-bd"/>
</dbReference>
<dbReference type="InterPro" id="IPR050896">
    <property type="entry name" value="Mito_lipid_metab_GTPase"/>
</dbReference>
<dbReference type="InterPro" id="IPR027417">
    <property type="entry name" value="P-loop_NTPase"/>
</dbReference>
<dbReference type="PANTHER" id="PTHR46434">
    <property type="entry name" value="GENETIC INTERACTOR OF PROHIBITINS 3, MITOCHONDRIAL"/>
    <property type="match status" value="1"/>
</dbReference>
<dbReference type="PANTHER" id="PTHR46434:SF1">
    <property type="entry name" value="GENETIC INTERACTOR OF PROHIBITINS 3, MITOCHONDRIAL"/>
    <property type="match status" value="1"/>
</dbReference>
<dbReference type="Pfam" id="PF01926">
    <property type="entry name" value="MMR_HSR1"/>
    <property type="match status" value="1"/>
</dbReference>
<dbReference type="SUPFAM" id="SSF52540">
    <property type="entry name" value="P-loop containing nucleoside triphosphate hydrolases"/>
    <property type="match status" value="1"/>
</dbReference>
<dbReference type="PROSITE" id="PS51721">
    <property type="entry name" value="G_CP"/>
    <property type="match status" value="1"/>
</dbReference>
<evidence type="ECO:0000250" key="1"/>
<evidence type="ECO:0000255" key="2"/>
<evidence type="ECO:0000255" key="3">
    <source>
        <dbReference type="PROSITE-ProRule" id="PRU01058"/>
    </source>
</evidence>
<organism>
    <name type="scientific">Saccharomyces cerevisiae (strain Lalvin EC1118 / Prise de mousse)</name>
    <name type="common">Baker's yeast</name>
    <dbReference type="NCBI Taxonomy" id="643680"/>
    <lineage>
        <taxon>Eukaryota</taxon>
        <taxon>Fungi</taxon>
        <taxon>Dikarya</taxon>
        <taxon>Ascomycota</taxon>
        <taxon>Saccharomycotina</taxon>
        <taxon>Saccharomycetes</taxon>
        <taxon>Saccharomycetales</taxon>
        <taxon>Saccharomycetaceae</taxon>
        <taxon>Saccharomyces</taxon>
    </lineage>
</organism>
<sequence length="556" mass="63880">MLNLCHALRGVRQFSCSVIVKVKCASCSIKLQDQDPSKPGYYTKPKSLPDSKLNPDLQDLKYLLFSQDIQLSKQAIQNDPDLKTKRDLLLRVICKRCSNALHHNNYNPEEFPESTLNDILNYVPRGSNVMHIVPFVEFPLHLDPNVLKRNDLETTLVLTKSDQVFKDKNAVSKKVPIFMKQFLKNTLRIDSNKTFAISALKNWNISMFYNYFKNYTYLLGNPNVGKSTLINTLLQKYLGYKVKIDSTGKINSPSEEVMQEAFTNPKNFFKIQAAGVSHIPNLTRSVQAYQVGGKILFDLPGYSTSTSRLRLEELIDERWLQRLRKTDLFNRKHIKQKTYESMKGTSQGGCYTVGGIFYLVPPKGSINQIVKYIPGPSKTFKNIEKGIDVFNSCNSSSGTHPLSRYCGIKSVICEKSQYKRYAIPPFIGSIEIVLKDIGYILLRTTGRYEFKGLHEIWIPRGIQVGIREPLENLIESGYQRYIETNGKESSCPRDRPIISSLYEMAPDEADTLNAVKKSYLEKTEKDLSARRFVDDDPYDLVQHLEKKKNPYWYYQW</sequence>
<reference key="1">
    <citation type="journal article" date="2009" name="Proc. Natl. Acad. Sci. U.S.A.">
        <title>Eukaryote-to-eukaryote gene transfer events revealed by the genome sequence of the wine yeast Saccharomyces cerevisiae EC1118.</title>
        <authorList>
            <person name="Novo M."/>
            <person name="Bigey F."/>
            <person name="Beyne E."/>
            <person name="Galeote V."/>
            <person name="Gavory F."/>
            <person name="Mallet S."/>
            <person name="Cambon B."/>
            <person name="Legras J.-L."/>
            <person name="Wincker P."/>
            <person name="Casaregola S."/>
            <person name="Dequin S."/>
        </authorList>
    </citation>
    <scope>NUCLEOTIDE SEQUENCE [LARGE SCALE GENOMIC DNA]</scope>
    <source>
        <strain>Lalvin EC1118 / Prise de mousse</strain>
    </source>
</reference>
<accession>C8ZGW1</accession>
<protein>
    <recommendedName>
        <fullName>Genetic interactor of prohibitins 3, mitochondrial</fullName>
    </recommendedName>
    <alternativeName>
        <fullName>Altered inheritance of mitochondria protein 40</fullName>
    </alternativeName>
    <alternativeName>
        <fullName>Found in mitochondrial proteome protein 38</fullName>
    </alternativeName>
</protein>
<comment type="function">
    <text evidence="1">Interacts genetically with prohibitins and thus may be involved in the mitochondrial lipid metabolism.</text>
</comment>
<comment type="subcellular location">
    <subcellularLocation>
        <location evidence="1">Mitochondrion</location>
    </subcellularLocation>
</comment>
<comment type="similarity">
    <text evidence="3">Belongs to the TRAFAC class YlqF/YawG GTPase family. GEP3 subfamily.</text>
</comment>
<proteinExistence type="inferred from homology"/>